<accession>P59917</accession>
<feature type="chain" id="PRO_0000214175" description="UPF0283 membrane protein HD_1769">
    <location>
        <begin position="1"/>
        <end position="341"/>
    </location>
</feature>
<feature type="transmembrane region" description="Helical" evidence="1">
    <location>
        <begin position="57"/>
        <end position="77"/>
    </location>
</feature>
<feature type="transmembrane region" description="Helical" evidence="1">
    <location>
        <begin position="86"/>
        <end position="106"/>
    </location>
</feature>
<feature type="transmembrane region" description="Helical" evidence="1">
    <location>
        <begin position="204"/>
        <end position="224"/>
    </location>
</feature>
<dbReference type="EMBL" id="AE017143">
    <property type="protein sequence ID" value="AAP96523.1"/>
    <property type="molecule type" value="Genomic_DNA"/>
</dbReference>
<dbReference type="RefSeq" id="WP_010945552.1">
    <property type="nucleotide sequence ID" value="NC_002940.2"/>
</dbReference>
<dbReference type="STRING" id="233412.HD_1769"/>
<dbReference type="KEGG" id="hdu:HD_1769"/>
<dbReference type="eggNOG" id="COG3768">
    <property type="taxonomic scope" value="Bacteria"/>
</dbReference>
<dbReference type="HOGENOM" id="CLU_057693_2_0_6"/>
<dbReference type="OrthoDB" id="958025at2"/>
<dbReference type="Proteomes" id="UP000001022">
    <property type="component" value="Chromosome"/>
</dbReference>
<dbReference type="GO" id="GO:0005886">
    <property type="term" value="C:plasma membrane"/>
    <property type="evidence" value="ECO:0007669"/>
    <property type="project" value="UniProtKB-SubCell"/>
</dbReference>
<dbReference type="HAMAP" id="MF_01085">
    <property type="entry name" value="UPF0283"/>
    <property type="match status" value="1"/>
</dbReference>
<dbReference type="InterPro" id="IPR021147">
    <property type="entry name" value="DUF697"/>
</dbReference>
<dbReference type="InterPro" id="IPR006507">
    <property type="entry name" value="UPF0283"/>
</dbReference>
<dbReference type="NCBIfam" id="TIGR01620">
    <property type="entry name" value="hyp_HI0043"/>
    <property type="match status" value="1"/>
</dbReference>
<dbReference type="PANTHER" id="PTHR39342">
    <property type="entry name" value="UPF0283 MEMBRANE PROTEIN YCJF"/>
    <property type="match status" value="1"/>
</dbReference>
<dbReference type="PANTHER" id="PTHR39342:SF1">
    <property type="entry name" value="UPF0283 MEMBRANE PROTEIN YCJF"/>
    <property type="match status" value="1"/>
</dbReference>
<dbReference type="Pfam" id="PF05128">
    <property type="entry name" value="DUF697"/>
    <property type="match status" value="1"/>
</dbReference>
<reference key="1">
    <citation type="submission" date="2003-06" db="EMBL/GenBank/DDBJ databases">
        <title>The complete genome sequence of Haemophilus ducreyi.</title>
        <authorList>
            <person name="Munson R.S. Jr."/>
            <person name="Ray W.C."/>
            <person name="Mahairas G."/>
            <person name="Sabo P."/>
            <person name="Mungur R."/>
            <person name="Johnson L."/>
            <person name="Nguyen D."/>
            <person name="Wang J."/>
            <person name="Forst C."/>
            <person name="Hood L."/>
        </authorList>
    </citation>
    <scope>NUCLEOTIDE SEQUENCE [LARGE SCALE GENOMIC DNA]</scope>
    <source>
        <strain>35000HP / ATCC 700724</strain>
    </source>
</reference>
<proteinExistence type="inferred from homology"/>
<protein>
    <recommendedName>
        <fullName evidence="1">UPF0283 membrane protein HD_1769</fullName>
    </recommendedName>
</protein>
<name>Y1769_HAEDU</name>
<keyword id="KW-0997">Cell inner membrane</keyword>
<keyword id="KW-1003">Cell membrane</keyword>
<keyword id="KW-0472">Membrane</keyword>
<keyword id="KW-1185">Reference proteome</keyword>
<keyword id="KW-0812">Transmembrane</keyword>
<keyword id="KW-1133">Transmembrane helix</keyword>
<evidence type="ECO:0000255" key="1">
    <source>
        <dbReference type="HAMAP-Rule" id="MF_01085"/>
    </source>
</evidence>
<comment type="subcellular location">
    <subcellularLocation>
        <location evidence="1">Cell inner membrane</location>
        <topology evidence="1">Multi-pass membrane protein</topology>
    </subcellularLocation>
</comment>
<comment type="similarity">
    <text evidence="1">Belongs to the UPF0283 family.</text>
</comment>
<gene>
    <name type="ordered locus">HD_1769</name>
</gene>
<sequence>MKKQIFNEENVSIEKKIEPKQEFDATKVSVEDETEQLTAELIIEKGFTPSRFWIRGLLAVLVLFGLAVIARSVQCLIDSVQAHQWIDLAFAIVFFMVSLAGIGAIIREWYWLVYLRKHQDTQHISKQLLMDELLVTSGQDNVVICHQILADLKSLPHIAVAKQRWQSQLNEAYNAKEVLYLFSENVLKPLDTQVKQIIAKSATENAIIVAVSPLVIVDMLMIAWRNIALVNKISRLYGMRLGYLSRLKLFKMVLTNMVFAGATEMATDVGMDFFSQNLTAKVSLRAAQGIGVGLLTARLGIKAMEFCRPIAFQKEERPKISEIRQQLLIAVKNRFFAKNEA</sequence>
<organism>
    <name type="scientific">Haemophilus ducreyi (strain 35000HP / ATCC 700724)</name>
    <dbReference type="NCBI Taxonomy" id="233412"/>
    <lineage>
        <taxon>Bacteria</taxon>
        <taxon>Pseudomonadati</taxon>
        <taxon>Pseudomonadota</taxon>
        <taxon>Gammaproteobacteria</taxon>
        <taxon>Pasteurellales</taxon>
        <taxon>Pasteurellaceae</taxon>
        <taxon>Haemophilus</taxon>
    </lineage>
</organism>